<proteinExistence type="inferred from homology"/>
<organism>
    <name type="scientific">Salmonella enteritidis PT4 (strain P125109)</name>
    <dbReference type="NCBI Taxonomy" id="550537"/>
    <lineage>
        <taxon>Bacteria</taxon>
        <taxon>Pseudomonadati</taxon>
        <taxon>Pseudomonadota</taxon>
        <taxon>Gammaproteobacteria</taxon>
        <taxon>Enterobacterales</taxon>
        <taxon>Enterobacteriaceae</taxon>
        <taxon>Salmonella</taxon>
    </lineage>
</organism>
<dbReference type="EC" id="4.1.1.50" evidence="1"/>
<dbReference type="EMBL" id="AM933172">
    <property type="protein sequence ID" value="CAR31758.1"/>
    <property type="molecule type" value="Genomic_DNA"/>
</dbReference>
<dbReference type="RefSeq" id="WP_000734294.1">
    <property type="nucleotide sequence ID" value="NC_011294.1"/>
</dbReference>
<dbReference type="KEGG" id="set:SEN0170"/>
<dbReference type="HOGENOM" id="CLU_092007_0_0_6"/>
<dbReference type="UniPathway" id="UPA00331">
    <property type="reaction ID" value="UER00451"/>
</dbReference>
<dbReference type="Proteomes" id="UP000000613">
    <property type="component" value="Chromosome"/>
</dbReference>
<dbReference type="GO" id="GO:0005829">
    <property type="term" value="C:cytosol"/>
    <property type="evidence" value="ECO:0007669"/>
    <property type="project" value="TreeGrafter"/>
</dbReference>
<dbReference type="GO" id="GO:0004014">
    <property type="term" value="F:adenosylmethionine decarboxylase activity"/>
    <property type="evidence" value="ECO:0007669"/>
    <property type="project" value="UniProtKB-UniRule"/>
</dbReference>
<dbReference type="GO" id="GO:0008295">
    <property type="term" value="P:spermidine biosynthetic process"/>
    <property type="evidence" value="ECO:0007669"/>
    <property type="project" value="UniProtKB-UniRule"/>
</dbReference>
<dbReference type="FunFam" id="3.60.90.10:FF:000001">
    <property type="entry name" value="S-adenosylmethionine decarboxylase proenzyme"/>
    <property type="match status" value="1"/>
</dbReference>
<dbReference type="Gene3D" id="3.60.90.10">
    <property type="entry name" value="S-adenosylmethionine decarboxylase"/>
    <property type="match status" value="1"/>
</dbReference>
<dbReference type="HAMAP" id="MF_00465">
    <property type="entry name" value="AdoMetDC_2"/>
    <property type="match status" value="1"/>
</dbReference>
<dbReference type="InterPro" id="IPR003826">
    <property type="entry name" value="AdoMetDC_fam_prok"/>
</dbReference>
<dbReference type="InterPro" id="IPR009165">
    <property type="entry name" value="S-AdoMet_deCO2ase_bac"/>
</dbReference>
<dbReference type="InterPro" id="IPR016067">
    <property type="entry name" value="S-AdoMet_deCO2ase_core"/>
</dbReference>
<dbReference type="NCBIfam" id="TIGR03331">
    <property type="entry name" value="SAM_DCase_Eco"/>
    <property type="match status" value="1"/>
</dbReference>
<dbReference type="PANTHER" id="PTHR33866">
    <property type="entry name" value="S-ADENOSYLMETHIONINE DECARBOXYLASE PROENZYME"/>
    <property type="match status" value="1"/>
</dbReference>
<dbReference type="PANTHER" id="PTHR33866:SF1">
    <property type="entry name" value="S-ADENOSYLMETHIONINE DECARBOXYLASE PROENZYME"/>
    <property type="match status" value="1"/>
</dbReference>
<dbReference type="Pfam" id="PF02675">
    <property type="entry name" value="AdoMet_dc"/>
    <property type="match status" value="1"/>
</dbReference>
<dbReference type="PIRSF" id="PIRSF001356">
    <property type="entry name" value="SAM_decarboxylas"/>
    <property type="match status" value="1"/>
</dbReference>
<dbReference type="SUPFAM" id="SSF56276">
    <property type="entry name" value="S-adenosylmethionine decarboxylase"/>
    <property type="match status" value="1"/>
</dbReference>
<comment type="function">
    <text evidence="1">Catalyzes the decarboxylation of S-adenosylmethionine to S-adenosylmethioninamine (dcAdoMet), the propylamine donor required for the synthesis of the polyamines spermine and spermidine from the diamine putrescine.</text>
</comment>
<comment type="catalytic activity">
    <reaction evidence="1">
        <text>S-adenosyl-L-methionine + H(+) = S-adenosyl 3-(methylsulfanyl)propylamine + CO2</text>
        <dbReference type="Rhea" id="RHEA:15981"/>
        <dbReference type="ChEBI" id="CHEBI:15378"/>
        <dbReference type="ChEBI" id="CHEBI:16526"/>
        <dbReference type="ChEBI" id="CHEBI:57443"/>
        <dbReference type="ChEBI" id="CHEBI:59789"/>
        <dbReference type="EC" id="4.1.1.50"/>
    </reaction>
</comment>
<comment type="cofactor">
    <cofactor evidence="1">
        <name>pyruvate</name>
        <dbReference type="ChEBI" id="CHEBI:15361"/>
    </cofactor>
    <text evidence="1">Binds 1 pyruvoyl group covalently per subunit.</text>
</comment>
<comment type="pathway">
    <text evidence="1">Amine and polyamine biosynthesis; S-adenosylmethioninamine biosynthesis; S-adenosylmethioninamine from S-adenosyl-L-methionine: step 1/1.</text>
</comment>
<comment type="subunit">
    <text evidence="1">Heterooctamer of four alpha and four beta chains arranged as a tetramer of alpha/beta heterodimers.</text>
</comment>
<comment type="PTM">
    <text evidence="1">Is synthesized initially as an inactive proenzyme. Formation of the active enzyme involves a self-maturation process in which the active site pyruvoyl group is generated from an internal serine residue via an autocatalytic post-translational modification. Two non-identical subunits are generated from the proenzyme in this reaction, and the pyruvate is formed at the N-terminus of the alpha chain, which is derived from the carboxyl end of the proenzyme. The post-translation cleavage follows an unusual pathway, termed non-hydrolytic serinolysis, in which the side chain hydroxyl group of the serine supplies its oxygen atom to form the C-terminus of the beta chain, while the remainder of the serine residue undergoes an oxidative deamination to produce ammonia and the pyruvoyl group blocking the N-terminus of the alpha chain.</text>
</comment>
<comment type="similarity">
    <text evidence="1">Belongs to the prokaryotic AdoMetDC family. Type 2 subfamily.</text>
</comment>
<reference key="1">
    <citation type="journal article" date="2008" name="Genome Res.">
        <title>Comparative genome analysis of Salmonella enteritidis PT4 and Salmonella gallinarum 287/91 provides insights into evolutionary and host adaptation pathways.</title>
        <authorList>
            <person name="Thomson N.R."/>
            <person name="Clayton D.J."/>
            <person name="Windhorst D."/>
            <person name="Vernikos G."/>
            <person name="Davidson S."/>
            <person name="Churcher C."/>
            <person name="Quail M.A."/>
            <person name="Stevens M."/>
            <person name="Jones M.A."/>
            <person name="Watson M."/>
            <person name="Barron A."/>
            <person name="Layton A."/>
            <person name="Pickard D."/>
            <person name="Kingsley R.A."/>
            <person name="Bignell A."/>
            <person name="Clark L."/>
            <person name="Harris B."/>
            <person name="Ormond D."/>
            <person name="Abdellah Z."/>
            <person name="Brooks K."/>
            <person name="Cherevach I."/>
            <person name="Chillingworth T."/>
            <person name="Woodward J."/>
            <person name="Norberczak H."/>
            <person name="Lord A."/>
            <person name="Arrowsmith C."/>
            <person name="Jagels K."/>
            <person name="Moule S."/>
            <person name="Mungall K."/>
            <person name="Saunders M."/>
            <person name="Whitehead S."/>
            <person name="Chabalgoity J.A."/>
            <person name="Maskell D."/>
            <person name="Humphreys T."/>
            <person name="Roberts M."/>
            <person name="Barrow P.A."/>
            <person name="Dougan G."/>
            <person name="Parkhill J."/>
        </authorList>
    </citation>
    <scope>NUCLEOTIDE SEQUENCE [LARGE SCALE GENOMIC DNA]</scope>
    <source>
        <strain>P125109</strain>
    </source>
</reference>
<accession>B5R2R4</accession>
<evidence type="ECO:0000255" key="1">
    <source>
        <dbReference type="HAMAP-Rule" id="MF_00465"/>
    </source>
</evidence>
<protein>
    <recommendedName>
        <fullName evidence="1">S-adenosylmethionine decarboxylase proenzyme</fullName>
        <shortName evidence="1">AdoMetDC</shortName>
        <shortName evidence="1">SAMDC</shortName>
        <ecNumber evidence="1">4.1.1.50</ecNumber>
    </recommendedName>
    <component>
        <recommendedName>
            <fullName evidence="1">S-adenosylmethionine decarboxylase beta chain</fullName>
        </recommendedName>
    </component>
    <component>
        <recommendedName>
            <fullName evidence="1">S-adenosylmethionine decarboxylase alpha chain</fullName>
        </recommendedName>
    </component>
</protein>
<keyword id="KW-0068">Autocatalytic cleavage</keyword>
<keyword id="KW-0210">Decarboxylase</keyword>
<keyword id="KW-0456">Lyase</keyword>
<keyword id="KW-0620">Polyamine biosynthesis</keyword>
<keyword id="KW-0670">Pyruvate</keyword>
<keyword id="KW-0949">S-adenosyl-L-methionine</keyword>
<keyword id="KW-0704">Schiff base</keyword>
<keyword id="KW-0745">Spermidine biosynthesis</keyword>
<keyword id="KW-0865">Zymogen</keyword>
<gene>
    <name evidence="1" type="primary">speD</name>
    <name type="ordered locus">SEN0170</name>
</gene>
<name>SPED_SALEP</name>
<sequence>MKKLKLHGFNNLTKSLSFCIYDICYAKTAEERDGYIAYIDELYNANRLTEILSETCSIIGANILNIARQDYEPQGASVTILVSEEPVDPKLIDQTEHPGPLPETVVAHLDKSHICVHTYPESHPEGGLCTFRADIEVSTCGVISPLKALNYLIHQLESDIVTIDYRVRGFTRDVNGMKHFIDHEINSIQNFMSEDMKSLYDMVDVNVYQENIFHTKMLLKEFDLKHYMFHTKPEDLTETERQQITAALWKEMREIYYGRNISAV</sequence>
<feature type="chain" id="PRO_0000364401" description="S-adenosylmethionine decarboxylase beta chain" evidence="1">
    <location>
        <begin position="1"/>
        <end position="111"/>
    </location>
</feature>
<feature type="chain" id="PRO_0000364402" description="S-adenosylmethionine decarboxylase alpha chain" evidence="1">
    <location>
        <begin position="112"/>
        <end position="264"/>
    </location>
</feature>
<feature type="active site" description="Schiff-base intermediate with substrate; via pyruvic acid" evidence="1">
    <location>
        <position position="112"/>
    </location>
</feature>
<feature type="active site" description="Proton acceptor; for processing activity" evidence="1">
    <location>
        <position position="117"/>
    </location>
</feature>
<feature type="active site" description="Proton donor; for catalytic activity" evidence="1">
    <location>
        <position position="140"/>
    </location>
</feature>
<feature type="site" description="Cleavage (non-hydrolytic); by autolysis" evidence="1">
    <location>
        <begin position="111"/>
        <end position="112"/>
    </location>
</feature>
<feature type="modified residue" description="Pyruvic acid (Ser); by autocatalysis" evidence="1">
    <location>
        <position position="112"/>
    </location>
</feature>